<comment type="function">
    <text evidence="1">Catalyzes the cyclization of GTP to (8S)-3',8-cyclo-7,8-dihydroguanosine 5'-triphosphate.</text>
</comment>
<comment type="catalytic activity">
    <reaction evidence="1">
        <text>GTP + AH2 + S-adenosyl-L-methionine = (8S)-3',8-cyclo-7,8-dihydroguanosine 5'-triphosphate + 5'-deoxyadenosine + L-methionine + A + H(+)</text>
        <dbReference type="Rhea" id="RHEA:49576"/>
        <dbReference type="ChEBI" id="CHEBI:13193"/>
        <dbReference type="ChEBI" id="CHEBI:15378"/>
        <dbReference type="ChEBI" id="CHEBI:17319"/>
        <dbReference type="ChEBI" id="CHEBI:17499"/>
        <dbReference type="ChEBI" id="CHEBI:37565"/>
        <dbReference type="ChEBI" id="CHEBI:57844"/>
        <dbReference type="ChEBI" id="CHEBI:59789"/>
        <dbReference type="ChEBI" id="CHEBI:131766"/>
        <dbReference type="EC" id="4.1.99.22"/>
    </reaction>
</comment>
<comment type="cofactor">
    <cofactor evidence="1">
        <name>[4Fe-4S] cluster</name>
        <dbReference type="ChEBI" id="CHEBI:49883"/>
    </cofactor>
    <text evidence="1">Binds 2 [4Fe-4S] clusters. Binds 1 [4Fe-4S] cluster coordinated with 3 cysteines and an exchangeable S-adenosyl-L-methionine and 1 [4Fe-4S] cluster coordinated with 3 cysteines and the GTP-derived substrate.</text>
</comment>
<comment type="pathway">
    <text evidence="1">Cofactor biosynthesis; molybdopterin biosynthesis.</text>
</comment>
<comment type="subunit">
    <text evidence="1">Monomer and homodimer.</text>
</comment>
<comment type="similarity">
    <text evidence="1">Belongs to the radical SAM superfamily. MoaA family.</text>
</comment>
<keyword id="KW-0004">4Fe-4S</keyword>
<keyword id="KW-0342">GTP-binding</keyword>
<keyword id="KW-0408">Iron</keyword>
<keyword id="KW-0411">Iron-sulfur</keyword>
<keyword id="KW-0456">Lyase</keyword>
<keyword id="KW-0479">Metal-binding</keyword>
<keyword id="KW-0501">Molybdenum cofactor biosynthesis</keyword>
<keyword id="KW-0547">Nucleotide-binding</keyword>
<keyword id="KW-1185">Reference proteome</keyword>
<keyword id="KW-0949">S-adenosyl-L-methionine</keyword>
<gene>
    <name evidence="1" type="primary">moaA</name>
    <name type="ordered locus">Atu1695</name>
    <name type="ORF">AGR_C_3114</name>
</gene>
<protein>
    <recommendedName>
        <fullName evidence="1">GTP 3',8-cyclase</fullName>
        <ecNumber evidence="1">4.1.99.22</ecNumber>
    </recommendedName>
    <alternativeName>
        <fullName evidence="1">Molybdenum cofactor biosynthesis protein A</fullName>
    </alternativeName>
</protein>
<organism>
    <name type="scientific">Agrobacterium fabrum (strain C58 / ATCC 33970)</name>
    <name type="common">Agrobacterium tumefaciens (strain C58)</name>
    <dbReference type="NCBI Taxonomy" id="176299"/>
    <lineage>
        <taxon>Bacteria</taxon>
        <taxon>Pseudomonadati</taxon>
        <taxon>Pseudomonadota</taxon>
        <taxon>Alphaproteobacteria</taxon>
        <taxon>Hyphomicrobiales</taxon>
        <taxon>Rhizobiaceae</taxon>
        <taxon>Rhizobium/Agrobacterium group</taxon>
        <taxon>Agrobacterium</taxon>
        <taxon>Agrobacterium tumefaciens complex</taxon>
    </lineage>
</organism>
<dbReference type="EC" id="4.1.99.22" evidence="1"/>
<dbReference type="EMBL" id="AE007869">
    <property type="protein sequence ID" value="AAK87467.1"/>
    <property type="molecule type" value="Genomic_DNA"/>
</dbReference>
<dbReference type="PIR" id="AI2784">
    <property type="entry name" value="AI2784"/>
</dbReference>
<dbReference type="PIR" id="B97564">
    <property type="entry name" value="B97564"/>
</dbReference>
<dbReference type="RefSeq" id="NP_354682.1">
    <property type="nucleotide sequence ID" value="NC_003062.2"/>
</dbReference>
<dbReference type="RefSeq" id="WP_010971804.1">
    <property type="nucleotide sequence ID" value="NC_003062.2"/>
</dbReference>
<dbReference type="SMR" id="Q8UER0"/>
<dbReference type="STRING" id="176299.Atu1695"/>
<dbReference type="EnsemblBacteria" id="AAK87467">
    <property type="protein sequence ID" value="AAK87467"/>
    <property type="gene ID" value="Atu1695"/>
</dbReference>
<dbReference type="GeneID" id="1133733"/>
<dbReference type="KEGG" id="atu:Atu1695"/>
<dbReference type="PATRIC" id="fig|176299.10.peg.1709"/>
<dbReference type="eggNOG" id="COG2896">
    <property type="taxonomic scope" value="Bacteria"/>
</dbReference>
<dbReference type="HOGENOM" id="CLU_009273_0_1_5"/>
<dbReference type="OrthoDB" id="9763993at2"/>
<dbReference type="PhylomeDB" id="Q8UER0"/>
<dbReference type="BioCyc" id="AGRO:ATU1695-MONOMER"/>
<dbReference type="UniPathway" id="UPA00344"/>
<dbReference type="Proteomes" id="UP000000813">
    <property type="component" value="Chromosome circular"/>
</dbReference>
<dbReference type="GO" id="GO:0051539">
    <property type="term" value="F:4 iron, 4 sulfur cluster binding"/>
    <property type="evidence" value="ECO:0007669"/>
    <property type="project" value="UniProtKB-UniRule"/>
</dbReference>
<dbReference type="GO" id="GO:0061799">
    <property type="term" value="F:cyclic pyranopterin monophosphate synthase activity"/>
    <property type="evidence" value="ECO:0007669"/>
    <property type="project" value="TreeGrafter"/>
</dbReference>
<dbReference type="GO" id="GO:0061798">
    <property type="term" value="F:GTP 3',8'-cyclase activity"/>
    <property type="evidence" value="ECO:0007669"/>
    <property type="project" value="UniProtKB-UniRule"/>
</dbReference>
<dbReference type="GO" id="GO:0005525">
    <property type="term" value="F:GTP binding"/>
    <property type="evidence" value="ECO:0007669"/>
    <property type="project" value="UniProtKB-UniRule"/>
</dbReference>
<dbReference type="GO" id="GO:0046872">
    <property type="term" value="F:metal ion binding"/>
    <property type="evidence" value="ECO:0007669"/>
    <property type="project" value="UniProtKB-KW"/>
</dbReference>
<dbReference type="GO" id="GO:1904047">
    <property type="term" value="F:S-adenosyl-L-methionine binding"/>
    <property type="evidence" value="ECO:0007669"/>
    <property type="project" value="UniProtKB-UniRule"/>
</dbReference>
<dbReference type="GO" id="GO:0006777">
    <property type="term" value="P:Mo-molybdopterin cofactor biosynthetic process"/>
    <property type="evidence" value="ECO:0007669"/>
    <property type="project" value="UniProtKB-UniRule"/>
</dbReference>
<dbReference type="CDD" id="cd01335">
    <property type="entry name" value="Radical_SAM"/>
    <property type="match status" value="1"/>
</dbReference>
<dbReference type="CDD" id="cd21117">
    <property type="entry name" value="Twitch_MoaA"/>
    <property type="match status" value="1"/>
</dbReference>
<dbReference type="Gene3D" id="3.20.20.70">
    <property type="entry name" value="Aldolase class I"/>
    <property type="match status" value="1"/>
</dbReference>
<dbReference type="HAMAP" id="MF_01225_B">
    <property type="entry name" value="MoaA_B"/>
    <property type="match status" value="1"/>
</dbReference>
<dbReference type="InterPro" id="IPR013785">
    <property type="entry name" value="Aldolase_TIM"/>
</dbReference>
<dbReference type="InterPro" id="IPR006638">
    <property type="entry name" value="Elp3/MiaA/NifB-like_rSAM"/>
</dbReference>
<dbReference type="InterPro" id="IPR013483">
    <property type="entry name" value="MoaA"/>
</dbReference>
<dbReference type="InterPro" id="IPR000385">
    <property type="entry name" value="MoaA_NifB_PqqE_Fe-S-bd_CS"/>
</dbReference>
<dbReference type="InterPro" id="IPR010505">
    <property type="entry name" value="MoaA_twitch"/>
</dbReference>
<dbReference type="InterPro" id="IPR050105">
    <property type="entry name" value="MoCo_biosynth_MoaA/MoaC"/>
</dbReference>
<dbReference type="InterPro" id="IPR007197">
    <property type="entry name" value="rSAM"/>
</dbReference>
<dbReference type="NCBIfam" id="TIGR02666">
    <property type="entry name" value="moaA"/>
    <property type="match status" value="1"/>
</dbReference>
<dbReference type="PANTHER" id="PTHR22960:SF0">
    <property type="entry name" value="MOLYBDENUM COFACTOR BIOSYNTHESIS PROTEIN 1"/>
    <property type="match status" value="1"/>
</dbReference>
<dbReference type="PANTHER" id="PTHR22960">
    <property type="entry name" value="MOLYBDOPTERIN COFACTOR SYNTHESIS PROTEIN A"/>
    <property type="match status" value="1"/>
</dbReference>
<dbReference type="Pfam" id="PF13353">
    <property type="entry name" value="Fer4_12"/>
    <property type="match status" value="1"/>
</dbReference>
<dbReference type="Pfam" id="PF06463">
    <property type="entry name" value="Mob_synth_C"/>
    <property type="match status" value="1"/>
</dbReference>
<dbReference type="Pfam" id="PF04055">
    <property type="entry name" value="Radical_SAM"/>
    <property type="match status" value="1"/>
</dbReference>
<dbReference type="SFLD" id="SFLDG01383">
    <property type="entry name" value="cyclic_pyranopterin_phosphate"/>
    <property type="match status" value="1"/>
</dbReference>
<dbReference type="SFLD" id="SFLDG01072">
    <property type="entry name" value="dehydrogenase_like"/>
    <property type="match status" value="1"/>
</dbReference>
<dbReference type="SMART" id="SM00729">
    <property type="entry name" value="Elp3"/>
    <property type="match status" value="1"/>
</dbReference>
<dbReference type="SUPFAM" id="SSF102114">
    <property type="entry name" value="Radical SAM enzymes"/>
    <property type="match status" value="1"/>
</dbReference>
<dbReference type="PROSITE" id="PS01305">
    <property type="entry name" value="MOAA_NIFB_PQQE"/>
    <property type="match status" value="1"/>
</dbReference>
<dbReference type="PROSITE" id="PS51918">
    <property type="entry name" value="RADICAL_SAM"/>
    <property type="match status" value="1"/>
</dbReference>
<feature type="chain" id="PRO_0000152944" description="GTP 3',8-cyclase">
    <location>
        <begin position="1"/>
        <end position="349"/>
    </location>
</feature>
<feature type="domain" description="Radical SAM core" evidence="2">
    <location>
        <begin position="24"/>
        <end position="249"/>
    </location>
</feature>
<feature type="binding site" evidence="1">
    <location>
        <position position="33"/>
    </location>
    <ligand>
        <name>GTP</name>
        <dbReference type="ChEBI" id="CHEBI:37565"/>
    </ligand>
</feature>
<feature type="binding site" evidence="1">
    <location>
        <position position="40"/>
    </location>
    <ligand>
        <name>[4Fe-4S] cluster</name>
        <dbReference type="ChEBI" id="CHEBI:49883"/>
        <label>1</label>
        <note>4Fe-4S-S-AdoMet</note>
    </ligand>
</feature>
<feature type="binding site" evidence="1">
    <location>
        <position position="44"/>
    </location>
    <ligand>
        <name>[4Fe-4S] cluster</name>
        <dbReference type="ChEBI" id="CHEBI:49883"/>
        <label>1</label>
        <note>4Fe-4S-S-AdoMet</note>
    </ligand>
</feature>
<feature type="binding site" evidence="1">
    <location>
        <position position="46"/>
    </location>
    <ligand>
        <name>S-adenosyl-L-methionine</name>
        <dbReference type="ChEBI" id="CHEBI:59789"/>
    </ligand>
</feature>
<feature type="binding site" evidence="1">
    <location>
        <position position="47"/>
    </location>
    <ligand>
        <name>[4Fe-4S] cluster</name>
        <dbReference type="ChEBI" id="CHEBI:49883"/>
        <label>1</label>
        <note>4Fe-4S-S-AdoMet</note>
    </ligand>
</feature>
<feature type="binding site" evidence="1">
    <location>
        <position position="82"/>
    </location>
    <ligand>
        <name>GTP</name>
        <dbReference type="ChEBI" id="CHEBI:37565"/>
    </ligand>
</feature>
<feature type="binding site" evidence="1">
    <location>
        <position position="86"/>
    </location>
    <ligand>
        <name>S-adenosyl-L-methionine</name>
        <dbReference type="ChEBI" id="CHEBI:59789"/>
    </ligand>
</feature>
<feature type="binding site" evidence="1">
    <location>
        <position position="116"/>
    </location>
    <ligand>
        <name>GTP</name>
        <dbReference type="ChEBI" id="CHEBI:37565"/>
    </ligand>
</feature>
<feature type="binding site" evidence="1">
    <location>
        <position position="140"/>
    </location>
    <ligand>
        <name>S-adenosyl-L-methionine</name>
        <dbReference type="ChEBI" id="CHEBI:59789"/>
    </ligand>
</feature>
<feature type="binding site" evidence="1">
    <location>
        <position position="176"/>
    </location>
    <ligand>
        <name>GTP</name>
        <dbReference type="ChEBI" id="CHEBI:37565"/>
    </ligand>
</feature>
<feature type="binding site" evidence="1">
    <location>
        <position position="210"/>
    </location>
    <ligand>
        <name>S-adenosyl-L-methionine</name>
        <dbReference type="ChEBI" id="CHEBI:59789"/>
    </ligand>
</feature>
<feature type="binding site" evidence="1">
    <location>
        <position position="273"/>
    </location>
    <ligand>
        <name>[4Fe-4S] cluster</name>
        <dbReference type="ChEBI" id="CHEBI:49883"/>
        <label>2</label>
        <note>4Fe-4S-substrate</note>
    </ligand>
</feature>
<feature type="binding site" evidence="1">
    <location>
        <position position="276"/>
    </location>
    <ligand>
        <name>[4Fe-4S] cluster</name>
        <dbReference type="ChEBI" id="CHEBI:49883"/>
        <label>2</label>
        <note>4Fe-4S-substrate</note>
    </ligand>
</feature>
<feature type="binding site" evidence="1">
    <location>
        <begin position="278"/>
        <end position="280"/>
    </location>
    <ligand>
        <name>GTP</name>
        <dbReference type="ChEBI" id="CHEBI:37565"/>
    </ligand>
</feature>
<feature type="binding site" evidence="1">
    <location>
        <position position="290"/>
    </location>
    <ligand>
        <name>[4Fe-4S] cluster</name>
        <dbReference type="ChEBI" id="CHEBI:49883"/>
        <label>2</label>
        <note>4Fe-4S-substrate</note>
    </ligand>
</feature>
<evidence type="ECO:0000255" key="1">
    <source>
        <dbReference type="HAMAP-Rule" id="MF_01225"/>
    </source>
</evidence>
<evidence type="ECO:0000255" key="2">
    <source>
        <dbReference type="PROSITE-ProRule" id="PRU01266"/>
    </source>
</evidence>
<name>MOAA_AGRFC</name>
<proteinExistence type="inferred from homology"/>
<accession>Q8UER0</accession>
<reference key="1">
    <citation type="journal article" date="2001" name="Science">
        <title>The genome of the natural genetic engineer Agrobacterium tumefaciens C58.</title>
        <authorList>
            <person name="Wood D.W."/>
            <person name="Setubal J.C."/>
            <person name="Kaul R."/>
            <person name="Monks D.E."/>
            <person name="Kitajima J.P."/>
            <person name="Okura V.K."/>
            <person name="Zhou Y."/>
            <person name="Chen L."/>
            <person name="Wood G.E."/>
            <person name="Almeida N.F. Jr."/>
            <person name="Woo L."/>
            <person name="Chen Y."/>
            <person name="Paulsen I.T."/>
            <person name="Eisen J.A."/>
            <person name="Karp P.D."/>
            <person name="Bovee D. Sr."/>
            <person name="Chapman P."/>
            <person name="Clendenning J."/>
            <person name="Deatherage G."/>
            <person name="Gillet W."/>
            <person name="Grant C."/>
            <person name="Kutyavin T."/>
            <person name="Levy R."/>
            <person name="Li M.-J."/>
            <person name="McClelland E."/>
            <person name="Palmieri A."/>
            <person name="Raymond C."/>
            <person name="Rouse G."/>
            <person name="Saenphimmachak C."/>
            <person name="Wu Z."/>
            <person name="Romero P."/>
            <person name="Gordon D."/>
            <person name="Zhang S."/>
            <person name="Yoo H."/>
            <person name="Tao Y."/>
            <person name="Biddle P."/>
            <person name="Jung M."/>
            <person name="Krespan W."/>
            <person name="Perry M."/>
            <person name="Gordon-Kamm B."/>
            <person name="Liao L."/>
            <person name="Kim S."/>
            <person name="Hendrick C."/>
            <person name="Zhao Z.-Y."/>
            <person name="Dolan M."/>
            <person name="Chumley F."/>
            <person name="Tingey S.V."/>
            <person name="Tomb J.-F."/>
            <person name="Gordon M.P."/>
            <person name="Olson M.V."/>
            <person name="Nester E.W."/>
        </authorList>
    </citation>
    <scope>NUCLEOTIDE SEQUENCE [LARGE SCALE GENOMIC DNA]</scope>
    <source>
        <strain>C58 / ATCC 33970</strain>
    </source>
</reference>
<reference key="2">
    <citation type="journal article" date="2001" name="Science">
        <title>Genome sequence of the plant pathogen and biotechnology agent Agrobacterium tumefaciens C58.</title>
        <authorList>
            <person name="Goodner B."/>
            <person name="Hinkle G."/>
            <person name="Gattung S."/>
            <person name="Miller N."/>
            <person name="Blanchard M."/>
            <person name="Qurollo B."/>
            <person name="Goldman B.S."/>
            <person name="Cao Y."/>
            <person name="Askenazi M."/>
            <person name="Halling C."/>
            <person name="Mullin L."/>
            <person name="Houmiel K."/>
            <person name="Gordon J."/>
            <person name="Vaudin M."/>
            <person name="Iartchouk O."/>
            <person name="Epp A."/>
            <person name="Liu F."/>
            <person name="Wollam C."/>
            <person name="Allinger M."/>
            <person name="Doughty D."/>
            <person name="Scott C."/>
            <person name="Lappas C."/>
            <person name="Markelz B."/>
            <person name="Flanagan C."/>
            <person name="Crowell C."/>
            <person name="Gurson J."/>
            <person name="Lomo C."/>
            <person name="Sear C."/>
            <person name="Strub G."/>
            <person name="Cielo C."/>
            <person name="Slater S."/>
        </authorList>
    </citation>
    <scope>NUCLEOTIDE SEQUENCE [LARGE SCALE GENOMIC DNA]</scope>
    <source>
        <strain>C58 / ATCC 33970</strain>
    </source>
</reference>
<sequence>MNSFSGSLEKAKTLTENNAPMVDPFGRAITYLRVSVTDRCDFRCTYCMSEHMTFLPKKDLLTLEELDRLCSVFITRGVRKLRLTGGEPLVRKNIMSLVRNLGRHVQSGTLDELTLTTNGSQLAKFAAELADCGVRRINVSLDTLDAQKFRQITRWGDIDRVMEGFDAAQAAGIKVKLNAVALKDFNDAEMPELMRFAHGRGMDLTVIETMPMGEIEEDRTDRYLPLSQLRADLERNFTLVDSDYQTGGPARYVTVKETGGRLGFITPMTHNFCESCNRVRLTCTGTLYMCLGQDDAADLRTALRASDSDAYLSAAIDEALLRKPKGHDFIIDRTHNRPAVSRHMSVTGG</sequence>